<accession>Q187C6</accession>
<keyword id="KW-0004">4Fe-4S</keyword>
<keyword id="KW-0408">Iron</keyword>
<keyword id="KW-0411">Iron-sulfur</keyword>
<keyword id="KW-0414">Isoprene biosynthesis</keyword>
<keyword id="KW-0479">Metal-binding</keyword>
<keyword id="KW-0560">Oxidoreductase</keyword>
<keyword id="KW-1185">Reference proteome</keyword>
<feature type="chain" id="PRO_1000021105" description="4-hydroxy-3-methylbut-2-enyl diphosphate reductase">
    <location>
        <begin position="1"/>
        <end position="279"/>
    </location>
</feature>
<feature type="active site" description="Proton donor" evidence="1">
    <location>
        <position position="126"/>
    </location>
</feature>
<feature type="binding site" evidence="1">
    <location>
        <position position="12"/>
    </location>
    <ligand>
        <name>[4Fe-4S] cluster</name>
        <dbReference type="ChEBI" id="CHEBI:49883"/>
    </ligand>
</feature>
<feature type="binding site" evidence="1">
    <location>
        <position position="41"/>
    </location>
    <ligand>
        <name>(2E)-4-hydroxy-3-methylbut-2-enyl diphosphate</name>
        <dbReference type="ChEBI" id="CHEBI:128753"/>
    </ligand>
</feature>
<feature type="binding site" evidence="1">
    <location>
        <position position="41"/>
    </location>
    <ligand>
        <name>dimethylallyl diphosphate</name>
        <dbReference type="ChEBI" id="CHEBI:57623"/>
    </ligand>
</feature>
<feature type="binding site" evidence="1">
    <location>
        <position position="41"/>
    </location>
    <ligand>
        <name>isopentenyl diphosphate</name>
        <dbReference type="ChEBI" id="CHEBI:128769"/>
    </ligand>
</feature>
<feature type="binding site" evidence="1">
    <location>
        <position position="74"/>
    </location>
    <ligand>
        <name>(2E)-4-hydroxy-3-methylbut-2-enyl diphosphate</name>
        <dbReference type="ChEBI" id="CHEBI:128753"/>
    </ligand>
</feature>
<feature type="binding site" evidence="1">
    <location>
        <position position="74"/>
    </location>
    <ligand>
        <name>dimethylallyl diphosphate</name>
        <dbReference type="ChEBI" id="CHEBI:57623"/>
    </ligand>
</feature>
<feature type="binding site" evidence="1">
    <location>
        <position position="74"/>
    </location>
    <ligand>
        <name>isopentenyl diphosphate</name>
        <dbReference type="ChEBI" id="CHEBI:128769"/>
    </ligand>
</feature>
<feature type="binding site" evidence="1">
    <location>
        <position position="96"/>
    </location>
    <ligand>
        <name>[4Fe-4S] cluster</name>
        <dbReference type="ChEBI" id="CHEBI:49883"/>
    </ligand>
</feature>
<feature type="binding site" evidence="1">
    <location>
        <position position="124"/>
    </location>
    <ligand>
        <name>(2E)-4-hydroxy-3-methylbut-2-enyl diphosphate</name>
        <dbReference type="ChEBI" id="CHEBI:128753"/>
    </ligand>
</feature>
<feature type="binding site" evidence="1">
    <location>
        <position position="124"/>
    </location>
    <ligand>
        <name>dimethylallyl diphosphate</name>
        <dbReference type="ChEBI" id="CHEBI:57623"/>
    </ligand>
</feature>
<feature type="binding site" evidence="1">
    <location>
        <position position="124"/>
    </location>
    <ligand>
        <name>isopentenyl diphosphate</name>
        <dbReference type="ChEBI" id="CHEBI:128769"/>
    </ligand>
</feature>
<feature type="binding site" evidence="1">
    <location>
        <position position="164"/>
    </location>
    <ligand>
        <name>(2E)-4-hydroxy-3-methylbut-2-enyl diphosphate</name>
        <dbReference type="ChEBI" id="CHEBI:128753"/>
    </ligand>
</feature>
<feature type="binding site" evidence="1">
    <location>
        <position position="192"/>
    </location>
    <ligand>
        <name>[4Fe-4S] cluster</name>
        <dbReference type="ChEBI" id="CHEBI:49883"/>
    </ligand>
</feature>
<feature type="binding site" evidence="1">
    <location>
        <position position="220"/>
    </location>
    <ligand>
        <name>(2E)-4-hydroxy-3-methylbut-2-enyl diphosphate</name>
        <dbReference type="ChEBI" id="CHEBI:128753"/>
    </ligand>
</feature>
<feature type="binding site" evidence="1">
    <location>
        <position position="220"/>
    </location>
    <ligand>
        <name>dimethylallyl diphosphate</name>
        <dbReference type="ChEBI" id="CHEBI:57623"/>
    </ligand>
</feature>
<feature type="binding site" evidence="1">
    <location>
        <position position="220"/>
    </location>
    <ligand>
        <name>isopentenyl diphosphate</name>
        <dbReference type="ChEBI" id="CHEBI:128769"/>
    </ligand>
</feature>
<feature type="binding site" evidence="1">
    <location>
        <position position="221"/>
    </location>
    <ligand>
        <name>(2E)-4-hydroxy-3-methylbut-2-enyl diphosphate</name>
        <dbReference type="ChEBI" id="CHEBI:128753"/>
    </ligand>
</feature>
<feature type="binding site" evidence="1">
    <location>
        <position position="221"/>
    </location>
    <ligand>
        <name>dimethylallyl diphosphate</name>
        <dbReference type="ChEBI" id="CHEBI:57623"/>
    </ligand>
</feature>
<feature type="binding site" evidence="1">
    <location>
        <position position="221"/>
    </location>
    <ligand>
        <name>isopentenyl diphosphate</name>
        <dbReference type="ChEBI" id="CHEBI:128769"/>
    </ligand>
</feature>
<feature type="binding site" evidence="1">
    <location>
        <position position="222"/>
    </location>
    <ligand>
        <name>(2E)-4-hydroxy-3-methylbut-2-enyl diphosphate</name>
        <dbReference type="ChEBI" id="CHEBI:128753"/>
    </ligand>
</feature>
<feature type="binding site" evidence="1">
    <location>
        <position position="222"/>
    </location>
    <ligand>
        <name>dimethylallyl diphosphate</name>
        <dbReference type="ChEBI" id="CHEBI:57623"/>
    </ligand>
</feature>
<feature type="binding site" evidence="1">
    <location>
        <position position="222"/>
    </location>
    <ligand>
        <name>isopentenyl diphosphate</name>
        <dbReference type="ChEBI" id="CHEBI:128769"/>
    </ligand>
</feature>
<feature type="binding site" evidence="1">
    <location>
        <position position="263"/>
    </location>
    <ligand>
        <name>(2E)-4-hydroxy-3-methylbut-2-enyl diphosphate</name>
        <dbReference type="ChEBI" id="CHEBI:128753"/>
    </ligand>
</feature>
<feature type="binding site" evidence="1">
    <location>
        <position position="263"/>
    </location>
    <ligand>
        <name>dimethylallyl diphosphate</name>
        <dbReference type="ChEBI" id="CHEBI:57623"/>
    </ligand>
</feature>
<feature type="binding site" evidence="1">
    <location>
        <position position="263"/>
    </location>
    <ligand>
        <name>isopentenyl diphosphate</name>
        <dbReference type="ChEBI" id="CHEBI:128769"/>
    </ligand>
</feature>
<reference key="1">
    <citation type="journal article" date="2006" name="Nat. Genet.">
        <title>The multidrug-resistant human pathogen Clostridium difficile has a highly mobile, mosaic genome.</title>
        <authorList>
            <person name="Sebaihia M."/>
            <person name="Wren B.W."/>
            <person name="Mullany P."/>
            <person name="Fairweather N.F."/>
            <person name="Minton N."/>
            <person name="Stabler R."/>
            <person name="Thomson N.R."/>
            <person name="Roberts A.P."/>
            <person name="Cerdeno-Tarraga A.M."/>
            <person name="Wang H."/>
            <person name="Holden M.T.G."/>
            <person name="Wright A."/>
            <person name="Churcher C."/>
            <person name="Quail M.A."/>
            <person name="Baker S."/>
            <person name="Bason N."/>
            <person name="Brooks K."/>
            <person name="Chillingworth T."/>
            <person name="Cronin A."/>
            <person name="Davis P."/>
            <person name="Dowd L."/>
            <person name="Fraser A."/>
            <person name="Feltwell T."/>
            <person name="Hance Z."/>
            <person name="Holroyd S."/>
            <person name="Jagels K."/>
            <person name="Moule S."/>
            <person name="Mungall K."/>
            <person name="Price C."/>
            <person name="Rabbinowitsch E."/>
            <person name="Sharp S."/>
            <person name="Simmonds M."/>
            <person name="Stevens K."/>
            <person name="Unwin L."/>
            <person name="Whithead S."/>
            <person name="Dupuy B."/>
            <person name="Dougan G."/>
            <person name="Barrell B."/>
            <person name="Parkhill J."/>
        </authorList>
    </citation>
    <scope>NUCLEOTIDE SEQUENCE [LARGE SCALE GENOMIC DNA]</scope>
    <source>
        <strain>630</strain>
    </source>
</reference>
<organism>
    <name type="scientific">Clostridioides difficile (strain 630)</name>
    <name type="common">Peptoclostridium difficile</name>
    <dbReference type="NCBI Taxonomy" id="272563"/>
    <lineage>
        <taxon>Bacteria</taxon>
        <taxon>Bacillati</taxon>
        <taxon>Bacillota</taxon>
        <taxon>Clostridia</taxon>
        <taxon>Peptostreptococcales</taxon>
        <taxon>Peptostreptococcaceae</taxon>
        <taxon>Clostridioides</taxon>
    </lineage>
</organism>
<protein>
    <recommendedName>
        <fullName evidence="1">4-hydroxy-3-methylbut-2-enyl diphosphate reductase</fullName>
        <shortName evidence="1">HMBPP reductase</shortName>
        <ecNumber evidence="1">1.17.7.4</ecNumber>
    </recommendedName>
</protein>
<evidence type="ECO:0000255" key="1">
    <source>
        <dbReference type="HAMAP-Rule" id="MF_00191"/>
    </source>
</evidence>
<name>ISPH_CLOD6</name>
<proteinExistence type="inferred from homology"/>
<sequence length="279" mass="31466">MNIKIAKNAGFCFGVKRAMKMAWDEVEKNDSGIYALGPLIHNKQAVAKYEEKGLKTVNEIDTIPNHENMIIRSHGVPENIYKEAKDKKLKIVDTTCPFVKKIHTVVSEYHNKGYEIIVIGDMKHPEVIGINGWCENSAIIIKTLEQMENMEFDNSKRYCLVAQTTINPELYISIVNKLSDKLEEIVFNDTICSATKTRQESAKELAKEVDCMIVIGGKHSSNTQKLVKVCEDLVPTFAIETKDELDVNTLKKYKNLGITAGASTPNWIIEEVVTFLENL</sequence>
<dbReference type="EC" id="1.17.7.4" evidence="1"/>
<dbReference type="EMBL" id="AM180355">
    <property type="protein sequence ID" value="CAJ68688.1"/>
    <property type="molecule type" value="Genomic_DNA"/>
</dbReference>
<dbReference type="RefSeq" id="WP_003439450.1">
    <property type="nucleotide sequence ID" value="NZ_JAUPES010000026.1"/>
</dbReference>
<dbReference type="RefSeq" id="YP_001088323.1">
    <property type="nucleotide sequence ID" value="NC_009089.1"/>
</dbReference>
<dbReference type="SMR" id="Q187C6"/>
<dbReference type="STRING" id="272563.CD630_18180"/>
<dbReference type="EnsemblBacteria" id="CAJ68688">
    <property type="protein sequence ID" value="CAJ68688"/>
    <property type="gene ID" value="CD630_18180"/>
</dbReference>
<dbReference type="KEGG" id="cdf:CD630_18180"/>
<dbReference type="KEGG" id="pdc:CDIF630_02018"/>
<dbReference type="PATRIC" id="fig|272563.120.peg.1912"/>
<dbReference type="eggNOG" id="COG0761">
    <property type="taxonomic scope" value="Bacteria"/>
</dbReference>
<dbReference type="OrthoDB" id="9804077at2"/>
<dbReference type="PhylomeDB" id="Q187C6"/>
<dbReference type="BioCyc" id="PDIF272563:G12WB-1962-MONOMER"/>
<dbReference type="UniPathway" id="UPA00056">
    <property type="reaction ID" value="UER00097"/>
</dbReference>
<dbReference type="UniPathway" id="UPA00059">
    <property type="reaction ID" value="UER00105"/>
</dbReference>
<dbReference type="Proteomes" id="UP000001978">
    <property type="component" value="Chromosome"/>
</dbReference>
<dbReference type="GO" id="GO:0051539">
    <property type="term" value="F:4 iron, 4 sulfur cluster binding"/>
    <property type="evidence" value="ECO:0007669"/>
    <property type="project" value="UniProtKB-UniRule"/>
</dbReference>
<dbReference type="GO" id="GO:0051745">
    <property type="term" value="F:4-hydroxy-3-methylbut-2-enyl diphosphate reductase activity"/>
    <property type="evidence" value="ECO:0007669"/>
    <property type="project" value="UniProtKB-UniRule"/>
</dbReference>
<dbReference type="GO" id="GO:0046872">
    <property type="term" value="F:metal ion binding"/>
    <property type="evidence" value="ECO:0007669"/>
    <property type="project" value="UniProtKB-KW"/>
</dbReference>
<dbReference type="GO" id="GO:0050992">
    <property type="term" value="P:dimethylallyl diphosphate biosynthetic process"/>
    <property type="evidence" value="ECO:0007669"/>
    <property type="project" value="UniProtKB-UniRule"/>
</dbReference>
<dbReference type="GO" id="GO:0019288">
    <property type="term" value="P:isopentenyl diphosphate biosynthetic process, methylerythritol 4-phosphate pathway"/>
    <property type="evidence" value="ECO:0007669"/>
    <property type="project" value="UniProtKB-UniRule"/>
</dbReference>
<dbReference type="GO" id="GO:0016114">
    <property type="term" value="P:terpenoid biosynthetic process"/>
    <property type="evidence" value="ECO:0007669"/>
    <property type="project" value="UniProtKB-UniRule"/>
</dbReference>
<dbReference type="CDD" id="cd13944">
    <property type="entry name" value="lytB_ispH"/>
    <property type="match status" value="1"/>
</dbReference>
<dbReference type="Gene3D" id="3.40.50.11270">
    <property type="match status" value="1"/>
</dbReference>
<dbReference type="Gene3D" id="3.40.1010.20">
    <property type="entry name" value="4-hydroxy-3-methylbut-2-enyl diphosphate reductase, catalytic domain"/>
    <property type="match status" value="2"/>
</dbReference>
<dbReference type="HAMAP" id="MF_00191">
    <property type="entry name" value="IspH"/>
    <property type="match status" value="1"/>
</dbReference>
<dbReference type="InterPro" id="IPR003451">
    <property type="entry name" value="LytB/IspH"/>
</dbReference>
<dbReference type="NCBIfam" id="TIGR00216">
    <property type="entry name" value="ispH_lytB"/>
    <property type="match status" value="1"/>
</dbReference>
<dbReference type="NCBIfam" id="NF002187">
    <property type="entry name" value="PRK01045.1-1"/>
    <property type="match status" value="1"/>
</dbReference>
<dbReference type="NCBIfam" id="NF009024">
    <property type="entry name" value="PRK12360.1"/>
    <property type="match status" value="1"/>
</dbReference>
<dbReference type="PANTHER" id="PTHR30426">
    <property type="entry name" value="4-HYDROXY-3-METHYLBUT-2-ENYL DIPHOSPHATE REDUCTASE"/>
    <property type="match status" value="1"/>
</dbReference>
<dbReference type="PANTHER" id="PTHR30426:SF0">
    <property type="entry name" value="4-HYDROXY-3-METHYLBUT-2-ENYL DIPHOSPHATE REDUCTASE"/>
    <property type="match status" value="1"/>
</dbReference>
<dbReference type="Pfam" id="PF02401">
    <property type="entry name" value="LYTB"/>
    <property type="match status" value="1"/>
</dbReference>
<comment type="function">
    <text evidence="1">Catalyzes the conversion of 1-hydroxy-2-methyl-2-(E)-butenyl 4-diphosphate (HMBPP) into a mixture of isopentenyl diphosphate (IPP) and dimethylallyl diphosphate (DMAPP). Acts in the terminal step of the DOXP/MEP pathway for isoprenoid precursor biosynthesis.</text>
</comment>
<comment type="catalytic activity">
    <reaction evidence="1">
        <text>isopentenyl diphosphate + 2 oxidized [2Fe-2S]-[ferredoxin] + H2O = (2E)-4-hydroxy-3-methylbut-2-enyl diphosphate + 2 reduced [2Fe-2S]-[ferredoxin] + 2 H(+)</text>
        <dbReference type="Rhea" id="RHEA:24488"/>
        <dbReference type="Rhea" id="RHEA-COMP:10000"/>
        <dbReference type="Rhea" id="RHEA-COMP:10001"/>
        <dbReference type="ChEBI" id="CHEBI:15377"/>
        <dbReference type="ChEBI" id="CHEBI:15378"/>
        <dbReference type="ChEBI" id="CHEBI:33737"/>
        <dbReference type="ChEBI" id="CHEBI:33738"/>
        <dbReference type="ChEBI" id="CHEBI:128753"/>
        <dbReference type="ChEBI" id="CHEBI:128769"/>
        <dbReference type="EC" id="1.17.7.4"/>
    </reaction>
</comment>
<comment type="catalytic activity">
    <reaction evidence="1">
        <text>dimethylallyl diphosphate + 2 oxidized [2Fe-2S]-[ferredoxin] + H2O = (2E)-4-hydroxy-3-methylbut-2-enyl diphosphate + 2 reduced [2Fe-2S]-[ferredoxin] + 2 H(+)</text>
        <dbReference type="Rhea" id="RHEA:24825"/>
        <dbReference type="Rhea" id="RHEA-COMP:10000"/>
        <dbReference type="Rhea" id="RHEA-COMP:10001"/>
        <dbReference type="ChEBI" id="CHEBI:15377"/>
        <dbReference type="ChEBI" id="CHEBI:15378"/>
        <dbReference type="ChEBI" id="CHEBI:33737"/>
        <dbReference type="ChEBI" id="CHEBI:33738"/>
        <dbReference type="ChEBI" id="CHEBI:57623"/>
        <dbReference type="ChEBI" id="CHEBI:128753"/>
        <dbReference type="EC" id="1.17.7.4"/>
    </reaction>
</comment>
<comment type="cofactor">
    <cofactor evidence="1">
        <name>[4Fe-4S] cluster</name>
        <dbReference type="ChEBI" id="CHEBI:49883"/>
    </cofactor>
    <text evidence="1">Binds 1 [4Fe-4S] cluster per subunit.</text>
</comment>
<comment type="pathway">
    <text evidence="1">Isoprenoid biosynthesis; dimethylallyl diphosphate biosynthesis; dimethylallyl diphosphate from (2E)-4-hydroxy-3-methylbutenyl diphosphate: step 1/1.</text>
</comment>
<comment type="pathway">
    <text evidence="1">Isoprenoid biosynthesis; isopentenyl diphosphate biosynthesis via DXP pathway; isopentenyl diphosphate from 1-deoxy-D-xylulose 5-phosphate: step 6/6.</text>
</comment>
<comment type="similarity">
    <text evidence="1">Belongs to the IspH family.</text>
</comment>
<gene>
    <name evidence="1" type="primary">ispH</name>
    <name type="ordered locus">CD630_18180</name>
</gene>